<proteinExistence type="inferred from homology"/>
<accession>O78928</accession>
<organism>
    <name type="scientific">Aonyx cinereus</name>
    <name type="common">Asian small-clawed otter</name>
    <name type="synonym">Amblonyx cinereus</name>
    <dbReference type="NCBI Taxonomy" id="452597"/>
    <lineage>
        <taxon>Eukaryota</taxon>
        <taxon>Metazoa</taxon>
        <taxon>Chordata</taxon>
        <taxon>Craniata</taxon>
        <taxon>Vertebrata</taxon>
        <taxon>Euteleostomi</taxon>
        <taxon>Mammalia</taxon>
        <taxon>Eutheria</taxon>
        <taxon>Laurasiatheria</taxon>
        <taxon>Carnivora</taxon>
        <taxon>Caniformia</taxon>
        <taxon>Musteloidea</taxon>
        <taxon>Mustelidae</taxon>
        <taxon>Lutrinae</taxon>
        <taxon>Aonyx</taxon>
    </lineage>
</organism>
<geneLocation type="mitochondrion"/>
<gene>
    <name type="primary">MT-CYB</name>
    <name type="synonym">COB</name>
    <name type="synonym">CYTB</name>
    <name type="synonym">MTCYB</name>
</gene>
<dbReference type="EMBL" id="AF057119">
    <property type="protein sequence ID" value="AAC33699.1"/>
    <property type="molecule type" value="Genomic_DNA"/>
</dbReference>
<dbReference type="SMR" id="O78928"/>
<dbReference type="GO" id="GO:0005743">
    <property type="term" value="C:mitochondrial inner membrane"/>
    <property type="evidence" value="ECO:0007669"/>
    <property type="project" value="UniProtKB-SubCell"/>
</dbReference>
<dbReference type="GO" id="GO:0045275">
    <property type="term" value="C:respiratory chain complex III"/>
    <property type="evidence" value="ECO:0007669"/>
    <property type="project" value="InterPro"/>
</dbReference>
<dbReference type="GO" id="GO:0046872">
    <property type="term" value="F:metal ion binding"/>
    <property type="evidence" value="ECO:0007669"/>
    <property type="project" value="UniProtKB-KW"/>
</dbReference>
<dbReference type="GO" id="GO:0008121">
    <property type="term" value="F:ubiquinol-cytochrome-c reductase activity"/>
    <property type="evidence" value="ECO:0007669"/>
    <property type="project" value="InterPro"/>
</dbReference>
<dbReference type="GO" id="GO:0006122">
    <property type="term" value="P:mitochondrial electron transport, ubiquinol to cytochrome c"/>
    <property type="evidence" value="ECO:0007669"/>
    <property type="project" value="TreeGrafter"/>
</dbReference>
<dbReference type="CDD" id="cd00290">
    <property type="entry name" value="cytochrome_b_C"/>
    <property type="match status" value="1"/>
</dbReference>
<dbReference type="CDD" id="cd00284">
    <property type="entry name" value="Cytochrome_b_N"/>
    <property type="match status" value="1"/>
</dbReference>
<dbReference type="FunFam" id="1.20.810.10:FF:000002">
    <property type="entry name" value="Cytochrome b"/>
    <property type="match status" value="1"/>
</dbReference>
<dbReference type="Gene3D" id="1.20.810.10">
    <property type="entry name" value="Cytochrome Bc1 Complex, Chain C"/>
    <property type="match status" value="1"/>
</dbReference>
<dbReference type="InterPro" id="IPR005798">
    <property type="entry name" value="Cyt_b/b6_C"/>
</dbReference>
<dbReference type="InterPro" id="IPR036150">
    <property type="entry name" value="Cyt_b/b6_C_sf"/>
</dbReference>
<dbReference type="InterPro" id="IPR005797">
    <property type="entry name" value="Cyt_b/b6_N"/>
</dbReference>
<dbReference type="InterPro" id="IPR027387">
    <property type="entry name" value="Cytb/b6-like_sf"/>
</dbReference>
<dbReference type="InterPro" id="IPR030689">
    <property type="entry name" value="Cytochrome_b"/>
</dbReference>
<dbReference type="InterPro" id="IPR048260">
    <property type="entry name" value="Cytochrome_b_C_euk/bac"/>
</dbReference>
<dbReference type="InterPro" id="IPR048259">
    <property type="entry name" value="Cytochrome_b_N_euk/bac"/>
</dbReference>
<dbReference type="InterPro" id="IPR016174">
    <property type="entry name" value="Di-haem_cyt_TM"/>
</dbReference>
<dbReference type="PANTHER" id="PTHR19271">
    <property type="entry name" value="CYTOCHROME B"/>
    <property type="match status" value="1"/>
</dbReference>
<dbReference type="PANTHER" id="PTHR19271:SF16">
    <property type="entry name" value="CYTOCHROME B"/>
    <property type="match status" value="1"/>
</dbReference>
<dbReference type="Pfam" id="PF00032">
    <property type="entry name" value="Cytochrom_B_C"/>
    <property type="match status" value="1"/>
</dbReference>
<dbReference type="Pfam" id="PF00033">
    <property type="entry name" value="Cytochrome_B"/>
    <property type="match status" value="1"/>
</dbReference>
<dbReference type="PIRSF" id="PIRSF038885">
    <property type="entry name" value="COB"/>
    <property type="match status" value="1"/>
</dbReference>
<dbReference type="SUPFAM" id="SSF81648">
    <property type="entry name" value="a domain/subunit of cytochrome bc1 complex (Ubiquinol-cytochrome c reductase)"/>
    <property type="match status" value="1"/>
</dbReference>
<dbReference type="SUPFAM" id="SSF81342">
    <property type="entry name" value="Transmembrane di-heme cytochromes"/>
    <property type="match status" value="1"/>
</dbReference>
<dbReference type="PROSITE" id="PS51003">
    <property type="entry name" value="CYTB_CTER"/>
    <property type="match status" value="1"/>
</dbReference>
<dbReference type="PROSITE" id="PS51002">
    <property type="entry name" value="CYTB_NTER"/>
    <property type="match status" value="1"/>
</dbReference>
<reference key="1">
    <citation type="journal article" date="1998" name="J. Zool. (Lond.)">
        <title>Phylogenetic relationships of otters (Carnivora: Mustelidae) based on mitochondrial cytochrome b sequences.</title>
        <authorList>
            <person name="Koepfli K.-P."/>
            <person name="Wayne R.K."/>
        </authorList>
    </citation>
    <scope>NUCLEOTIDE SEQUENCE [GENOMIC DNA]</scope>
</reference>
<name>CYB_AONCI</name>
<comment type="function">
    <text evidence="2">Component of the ubiquinol-cytochrome c reductase complex (complex III or cytochrome b-c1 complex) that is part of the mitochondrial respiratory chain. The b-c1 complex mediates electron transfer from ubiquinol to cytochrome c. Contributes to the generation of a proton gradient across the mitochondrial membrane that is then used for ATP synthesis.</text>
</comment>
<comment type="cofactor">
    <cofactor evidence="2">
        <name>heme b</name>
        <dbReference type="ChEBI" id="CHEBI:60344"/>
    </cofactor>
    <text evidence="2">Binds 2 heme b groups non-covalently.</text>
</comment>
<comment type="subunit">
    <text evidence="2">The cytochrome bc1 complex contains 11 subunits: 3 respiratory subunits (MT-CYB, CYC1 and UQCRFS1), 2 core proteins (UQCRC1 and UQCRC2) and 6 low-molecular weight proteins (UQCRH/QCR6, UQCRB/QCR7, UQCRQ/QCR8, UQCR10/QCR9, UQCR11/QCR10 and a cleavage product of UQCRFS1). This cytochrome bc1 complex then forms a dimer.</text>
</comment>
<comment type="subcellular location">
    <subcellularLocation>
        <location evidence="2">Mitochondrion inner membrane</location>
        <topology evidence="2">Multi-pass membrane protein</topology>
    </subcellularLocation>
</comment>
<comment type="miscellaneous">
    <text evidence="1">Heme 1 (or BL or b562) is low-potential and absorbs at about 562 nm, and heme 2 (or BH or b566) is high-potential and absorbs at about 566 nm.</text>
</comment>
<comment type="similarity">
    <text evidence="3 4">Belongs to the cytochrome b family.</text>
</comment>
<comment type="caution">
    <text evidence="2">The full-length protein contains only eight transmembrane helices, not nine as predicted by bioinformatics tools.</text>
</comment>
<sequence length="379" mass="42538">MTNIRKTHPLAKIINDSFVDLPAPSNISAWWNFGSLLGICLILQILTGLFLAMHYTSDTTTAFSSVTHICRDVNYGWIIRYMHANGASMFFICLFLHVGRGLYYGSYMFPETWNIGIILLFTTMATAFMGYVLPWGQMSFWGATVITNLLSAVPYIGTDLVEWIWGGFSVDKATLTRFFAFHFILPFIILALAAIHLLFLHETGSNNPSGIPSDSDKIPFHPYYTIKDVLGALLLILMLMTLVLFSPDLLGDPDNYTPANPLSTPPHIKPEWYFLFAYAILRSIPNKLGGVLALILSILILAVVPLLHTSNQRSMMFRPLSQCLFWLLVADLLTLTWIGGQPVEYPFIAIGQLASILYFMLLLVLMPIASIIENSLLKW</sequence>
<evidence type="ECO:0000250" key="1"/>
<evidence type="ECO:0000250" key="2">
    <source>
        <dbReference type="UniProtKB" id="P00157"/>
    </source>
</evidence>
<evidence type="ECO:0000255" key="3">
    <source>
        <dbReference type="PROSITE-ProRule" id="PRU00967"/>
    </source>
</evidence>
<evidence type="ECO:0000255" key="4">
    <source>
        <dbReference type="PROSITE-ProRule" id="PRU00968"/>
    </source>
</evidence>
<feature type="chain" id="PRO_0000060570" description="Cytochrome b">
    <location>
        <begin position="1"/>
        <end position="379"/>
    </location>
</feature>
<feature type="transmembrane region" description="Helical" evidence="2">
    <location>
        <begin position="33"/>
        <end position="53"/>
    </location>
</feature>
<feature type="transmembrane region" description="Helical" evidence="2">
    <location>
        <begin position="77"/>
        <end position="98"/>
    </location>
</feature>
<feature type="transmembrane region" description="Helical" evidence="2">
    <location>
        <begin position="113"/>
        <end position="133"/>
    </location>
</feature>
<feature type="transmembrane region" description="Helical" evidence="2">
    <location>
        <begin position="178"/>
        <end position="198"/>
    </location>
</feature>
<feature type="transmembrane region" description="Helical" evidence="2">
    <location>
        <begin position="226"/>
        <end position="246"/>
    </location>
</feature>
<feature type="transmembrane region" description="Helical" evidence="2">
    <location>
        <begin position="288"/>
        <end position="308"/>
    </location>
</feature>
<feature type="transmembrane region" description="Helical" evidence="2">
    <location>
        <begin position="320"/>
        <end position="340"/>
    </location>
</feature>
<feature type="transmembrane region" description="Helical" evidence="2">
    <location>
        <begin position="347"/>
        <end position="367"/>
    </location>
</feature>
<feature type="binding site" description="axial binding residue" evidence="2">
    <location>
        <position position="83"/>
    </location>
    <ligand>
        <name>heme b</name>
        <dbReference type="ChEBI" id="CHEBI:60344"/>
        <label>b562</label>
    </ligand>
    <ligandPart>
        <name>Fe</name>
        <dbReference type="ChEBI" id="CHEBI:18248"/>
    </ligandPart>
</feature>
<feature type="binding site" description="axial binding residue" evidence="2">
    <location>
        <position position="97"/>
    </location>
    <ligand>
        <name>heme b</name>
        <dbReference type="ChEBI" id="CHEBI:60344"/>
        <label>b566</label>
    </ligand>
    <ligandPart>
        <name>Fe</name>
        <dbReference type="ChEBI" id="CHEBI:18248"/>
    </ligandPart>
</feature>
<feature type="binding site" description="axial binding residue" evidence="2">
    <location>
        <position position="182"/>
    </location>
    <ligand>
        <name>heme b</name>
        <dbReference type="ChEBI" id="CHEBI:60344"/>
        <label>b562</label>
    </ligand>
    <ligandPart>
        <name>Fe</name>
        <dbReference type="ChEBI" id="CHEBI:18248"/>
    </ligandPart>
</feature>
<feature type="binding site" description="axial binding residue" evidence="2">
    <location>
        <position position="196"/>
    </location>
    <ligand>
        <name>heme b</name>
        <dbReference type="ChEBI" id="CHEBI:60344"/>
        <label>b566</label>
    </ligand>
    <ligandPart>
        <name>Fe</name>
        <dbReference type="ChEBI" id="CHEBI:18248"/>
    </ligandPart>
</feature>
<feature type="binding site" evidence="2">
    <location>
        <position position="201"/>
    </location>
    <ligand>
        <name>a ubiquinone</name>
        <dbReference type="ChEBI" id="CHEBI:16389"/>
    </ligand>
</feature>
<keyword id="KW-0249">Electron transport</keyword>
<keyword id="KW-0349">Heme</keyword>
<keyword id="KW-0408">Iron</keyword>
<keyword id="KW-0472">Membrane</keyword>
<keyword id="KW-0479">Metal-binding</keyword>
<keyword id="KW-0496">Mitochondrion</keyword>
<keyword id="KW-0999">Mitochondrion inner membrane</keyword>
<keyword id="KW-0679">Respiratory chain</keyword>
<keyword id="KW-0812">Transmembrane</keyword>
<keyword id="KW-1133">Transmembrane helix</keyword>
<keyword id="KW-0813">Transport</keyword>
<keyword id="KW-0830">Ubiquinone</keyword>
<protein>
    <recommendedName>
        <fullName>Cytochrome b</fullName>
    </recommendedName>
    <alternativeName>
        <fullName>Complex III subunit 3</fullName>
    </alternativeName>
    <alternativeName>
        <fullName>Complex III subunit III</fullName>
    </alternativeName>
    <alternativeName>
        <fullName>Cytochrome b-c1 complex subunit 3</fullName>
    </alternativeName>
    <alternativeName>
        <fullName>Ubiquinol-cytochrome-c reductase complex cytochrome b subunit</fullName>
    </alternativeName>
</protein>